<evidence type="ECO:0000269" key="1">
    <source>
    </source>
</evidence>
<evidence type="ECO:0000269" key="2">
    <source>
    </source>
</evidence>
<evidence type="ECO:0000269" key="3">
    <source>
    </source>
</evidence>
<evidence type="ECO:0000269" key="4">
    <source>
    </source>
</evidence>
<evidence type="ECO:0000303" key="5">
    <source>
    </source>
</evidence>
<evidence type="ECO:0000303" key="6">
    <source>
    </source>
</evidence>
<evidence type="ECO:0000303" key="7">
    <source>
    </source>
</evidence>
<evidence type="ECO:0000305" key="8"/>
<evidence type="ECO:0000305" key="9">
    <source>
    </source>
</evidence>
<evidence type="ECO:0000305" key="10">
    <source>
    </source>
</evidence>
<evidence type="ECO:0000312" key="11">
    <source>
        <dbReference type="HGNC" id="HGNC:17358"/>
    </source>
</evidence>
<evidence type="ECO:0007829" key="12">
    <source>
        <dbReference type="PDB" id="3S4Y"/>
    </source>
</evidence>
<keyword id="KW-0002">3D-structure</keyword>
<keyword id="KW-0025">Alternative splicing</keyword>
<keyword id="KW-0067">ATP-binding</keyword>
<keyword id="KW-0225">Disease variant</keyword>
<keyword id="KW-0418">Kinase</keyword>
<keyword id="KW-0547">Nucleotide-binding</keyword>
<keyword id="KW-1267">Proteomics identification</keyword>
<keyword id="KW-1185">Reference proteome</keyword>
<keyword id="KW-0808">Transferase</keyword>
<dbReference type="EC" id="2.7.6.-" evidence="4"/>
<dbReference type="EMBL" id="AB028138">
    <property type="protein sequence ID" value="BAB20326.1"/>
    <property type="molecule type" value="mRNA"/>
</dbReference>
<dbReference type="EMBL" id="AF297710">
    <property type="protein sequence ID" value="AAK01351.1"/>
    <property type="molecule type" value="mRNA"/>
</dbReference>
<dbReference type="EMBL" id="AY206415">
    <property type="protein sequence ID" value="AAO38775.1"/>
    <property type="molecule type" value="mRNA"/>
</dbReference>
<dbReference type="EMBL" id="AK026374">
    <property type="protein sequence ID" value="BAB15465.1"/>
    <property type="status" value="ALT_INIT"/>
    <property type="molecule type" value="mRNA"/>
</dbReference>
<dbReference type="EMBL" id="AK289652">
    <property type="protein sequence ID" value="BAF82341.1"/>
    <property type="molecule type" value="mRNA"/>
</dbReference>
<dbReference type="EMBL" id="AC004534">
    <property type="status" value="NOT_ANNOTATED_CDS"/>
    <property type="molecule type" value="Genomic_DNA"/>
</dbReference>
<dbReference type="EMBL" id="AC004743">
    <property type="status" value="NOT_ANNOTATED_CDS"/>
    <property type="molecule type" value="Genomic_DNA"/>
</dbReference>
<dbReference type="EMBL" id="AC004833">
    <property type="status" value="NOT_ANNOTATED_CDS"/>
    <property type="molecule type" value="Genomic_DNA"/>
</dbReference>
<dbReference type="EMBL" id="AC004864">
    <property type="status" value="NOT_ANNOTATED_CDS"/>
    <property type="molecule type" value="Genomic_DNA"/>
</dbReference>
<dbReference type="EMBL" id="AC005677">
    <property type="status" value="NOT_ANNOTATED_CDS"/>
    <property type="molecule type" value="Genomic_DNA"/>
</dbReference>
<dbReference type="EMBL" id="AC074384">
    <property type="status" value="NOT_ANNOTATED_CDS"/>
    <property type="molecule type" value="Genomic_DNA"/>
</dbReference>
<dbReference type="EMBL" id="CH471146">
    <property type="protein sequence ID" value="EAW80091.1"/>
    <property type="molecule type" value="Genomic_DNA"/>
</dbReference>
<dbReference type="EMBL" id="CH471146">
    <property type="protein sequence ID" value="EAW80092.1"/>
    <property type="molecule type" value="Genomic_DNA"/>
</dbReference>
<dbReference type="EMBL" id="BC040555">
    <property type="protein sequence ID" value="AAH40555.1"/>
    <property type="molecule type" value="mRNA"/>
</dbReference>
<dbReference type="EMBL" id="BC068460">
    <property type="protein sequence ID" value="AAH68460.1"/>
    <property type="molecule type" value="mRNA"/>
</dbReference>
<dbReference type="CCDS" id="CCDS5888.1">
    <molecule id="Q9H3S4-1"/>
</dbReference>
<dbReference type="RefSeq" id="NP_001035947.1">
    <property type="nucleotide sequence ID" value="NM_001042482.1"/>
</dbReference>
<dbReference type="RefSeq" id="NP_001337808.1">
    <molecule id="Q9H3S4-1"/>
    <property type="nucleotide sequence ID" value="NM_001350879.1"/>
</dbReference>
<dbReference type="RefSeq" id="NP_071890.2">
    <molecule id="Q9H3S4-1"/>
    <property type="nucleotide sequence ID" value="NM_022445.3"/>
</dbReference>
<dbReference type="RefSeq" id="XP_005250027.1">
    <molecule id="Q9H3S4-1"/>
    <property type="nucleotide sequence ID" value="XM_005249970.2"/>
</dbReference>
<dbReference type="RefSeq" id="XP_011514349.1">
    <property type="nucleotide sequence ID" value="XM_011516047.2"/>
</dbReference>
<dbReference type="RefSeq" id="XP_011514350.1">
    <property type="nucleotide sequence ID" value="XM_011516048.1"/>
</dbReference>
<dbReference type="RefSeq" id="XP_011514352.1">
    <property type="nucleotide sequence ID" value="XM_011516050.1"/>
</dbReference>
<dbReference type="RefSeq" id="XP_016867462.1">
    <property type="nucleotide sequence ID" value="XM_017011973.1"/>
</dbReference>
<dbReference type="RefSeq" id="XP_016867471.1">
    <property type="nucleotide sequence ID" value="XM_017011982.1"/>
</dbReference>
<dbReference type="RefSeq" id="XP_016867472.1">
    <property type="nucleotide sequence ID" value="XM_017011983.1"/>
</dbReference>
<dbReference type="RefSeq" id="XP_016867473.1">
    <property type="nucleotide sequence ID" value="XM_017011984.1"/>
</dbReference>
<dbReference type="RefSeq" id="XP_016867474.1">
    <property type="nucleotide sequence ID" value="XM_017011985.1"/>
</dbReference>
<dbReference type="RefSeq" id="XP_016867475.1">
    <property type="nucleotide sequence ID" value="XM_017011986.1"/>
</dbReference>
<dbReference type="RefSeq" id="XP_047276148.1">
    <molecule id="Q9H3S4-1"/>
    <property type="nucleotide sequence ID" value="XM_047420192.1"/>
</dbReference>
<dbReference type="RefSeq" id="XP_054213861.1">
    <molecule id="Q9H3S4-1"/>
    <property type="nucleotide sequence ID" value="XM_054357886.1"/>
</dbReference>
<dbReference type="RefSeq" id="XP_054213862.1">
    <molecule id="Q9H3S4-1"/>
    <property type="nucleotide sequence ID" value="XM_054357887.1"/>
</dbReference>
<dbReference type="PDB" id="3S4Y">
    <property type="method" value="X-ray"/>
    <property type="resolution" value="1.80 A"/>
    <property type="chains" value="A/B=15-243"/>
</dbReference>
<dbReference type="PDB" id="9HJC">
    <property type="method" value="EM"/>
    <property type="resolution" value="2.10 A"/>
    <property type="chains" value="A/B=1-243"/>
</dbReference>
<dbReference type="PDBsum" id="3S4Y"/>
<dbReference type="PDBsum" id="9HJC"/>
<dbReference type="EMDB" id="EMD-52212"/>
<dbReference type="SMR" id="Q9H3S4"/>
<dbReference type="BioGRID" id="117952">
    <property type="interactions" value="31"/>
</dbReference>
<dbReference type="FunCoup" id="Q9H3S4">
    <property type="interactions" value="1031"/>
</dbReference>
<dbReference type="IntAct" id="Q9H3S4">
    <property type="interactions" value="21"/>
</dbReference>
<dbReference type="MINT" id="Q9H3S4"/>
<dbReference type="STRING" id="9606.ENSP00000353165"/>
<dbReference type="ChEMBL" id="CHEMBL6155"/>
<dbReference type="DrugBank" id="DB04768">
    <property type="generic name" value="Pyrithiamine Pyrophosphate"/>
</dbReference>
<dbReference type="DrugBank" id="DB00152">
    <property type="generic name" value="Thiamine"/>
</dbReference>
<dbReference type="DrugCentral" id="Q9H3S4"/>
<dbReference type="iPTMnet" id="Q9H3S4"/>
<dbReference type="PhosphoSitePlus" id="Q9H3S4"/>
<dbReference type="BioMuta" id="TPK1"/>
<dbReference type="DMDM" id="44888537"/>
<dbReference type="jPOST" id="Q9H3S4"/>
<dbReference type="MassIVE" id="Q9H3S4"/>
<dbReference type="PaxDb" id="9606-ENSP00000353165"/>
<dbReference type="PeptideAtlas" id="Q9H3S4"/>
<dbReference type="ProteomicsDB" id="80748">
    <molecule id="Q9H3S4-1"/>
</dbReference>
<dbReference type="Pumba" id="Q9H3S4"/>
<dbReference type="Antibodypedia" id="18523">
    <property type="antibodies" value="172 antibodies from 25 providers"/>
</dbReference>
<dbReference type="DNASU" id="27010"/>
<dbReference type="Ensembl" id="ENST00000360057.7">
    <molecule id="Q9H3S4-1"/>
    <property type="protein sequence ID" value="ENSP00000353165.3"/>
    <property type="gene ID" value="ENSG00000196511.15"/>
</dbReference>
<dbReference type="GeneID" id="27010"/>
<dbReference type="KEGG" id="hsa:27010"/>
<dbReference type="MANE-Select" id="ENST00000360057.7">
    <property type="protein sequence ID" value="ENSP00000353165.3"/>
    <property type="RefSeq nucleotide sequence ID" value="NM_022445.4"/>
    <property type="RefSeq protein sequence ID" value="NP_071890.2"/>
</dbReference>
<dbReference type="UCSC" id="uc003weq.3">
    <molecule id="Q9H3S4-1"/>
    <property type="organism name" value="human"/>
</dbReference>
<dbReference type="AGR" id="HGNC:17358"/>
<dbReference type="CTD" id="27010"/>
<dbReference type="DisGeNET" id="27010"/>
<dbReference type="GeneCards" id="TPK1"/>
<dbReference type="HGNC" id="HGNC:17358">
    <property type="gene designation" value="TPK1"/>
</dbReference>
<dbReference type="HPA" id="ENSG00000196511">
    <property type="expression patterns" value="Tissue enhanced (intestine)"/>
</dbReference>
<dbReference type="MalaCards" id="TPK1"/>
<dbReference type="MIM" id="606370">
    <property type="type" value="gene"/>
</dbReference>
<dbReference type="MIM" id="614458">
    <property type="type" value="phenotype"/>
</dbReference>
<dbReference type="neXtProt" id="NX_Q9H3S4"/>
<dbReference type="OpenTargets" id="ENSG00000196511"/>
<dbReference type="Orphanet" id="293955">
    <property type="disease" value="Childhood encephalopathy due to thiamine pyrophosphokinase deficiency"/>
</dbReference>
<dbReference type="PharmGKB" id="PA38235"/>
<dbReference type="VEuPathDB" id="HostDB:ENSG00000196511"/>
<dbReference type="eggNOG" id="KOG3153">
    <property type="taxonomic scope" value="Eukaryota"/>
</dbReference>
<dbReference type="GeneTree" id="ENSGT00390000016016"/>
<dbReference type="InParanoid" id="Q9H3S4"/>
<dbReference type="OMA" id="HHLYMMT"/>
<dbReference type="OrthoDB" id="25149at2759"/>
<dbReference type="PAN-GO" id="Q9H3S4">
    <property type="GO annotations" value="2 GO annotations based on evolutionary models"/>
</dbReference>
<dbReference type="PhylomeDB" id="Q9H3S4"/>
<dbReference type="TreeFam" id="TF313224"/>
<dbReference type="BRENDA" id="2.7.6.2">
    <property type="organism ID" value="2681"/>
</dbReference>
<dbReference type="PathwayCommons" id="Q9H3S4"/>
<dbReference type="Reactome" id="R-HSA-196819">
    <property type="pathway name" value="Vitamin B1 (thiamin) metabolism"/>
</dbReference>
<dbReference type="SignaLink" id="Q9H3S4"/>
<dbReference type="UniPathway" id="UPA00060">
    <property type="reaction ID" value="UER00597"/>
</dbReference>
<dbReference type="BioGRID-ORCS" id="27010">
    <property type="hits" value="42 hits in 1174 CRISPR screens"/>
</dbReference>
<dbReference type="ChiTaRS" id="TPK1">
    <property type="organism name" value="human"/>
</dbReference>
<dbReference type="EvolutionaryTrace" id="Q9H3S4"/>
<dbReference type="GeneWiki" id="TPK1"/>
<dbReference type="GenomeRNAi" id="27010"/>
<dbReference type="Pharos" id="Q9H3S4">
    <property type="development level" value="Tbio"/>
</dbReference>
<dbReference type="PRO" id="PR:Q9H3S4"/>
<dbReference type="Proteomes" id="UP000005640">
    <property type="component" value="Chromosome 7"/>
</dbReference>
<dbReference type="RNAct" id="Q9H3S4">
    <property type="molecule type" value="protein"/>
</dbReference>
<dbReference type="Bgee" id="ENSG00000196511">
    <property type="expression patterns" value="Expressed in secondary oocyte and 153 other cell types or tissues"/>
</dbReference>
<dbReference type="ExpressionAtlas" id="Q9H3S4">
    <property type="expression patterns" value="baseline and differential"/>
</dbReference>
<dbReference type="GO" id="GO:0005829">
    <property type="term" value="C:cytosol"/>
    <property type="evidence" value="ECO:0000304"/>
    <property type="project" value="Reactome"/>
</dbReference>
<dbReference type="GO" id="GO:0005524">
    <property type="term" value="F:ATP binding"/>
    <property type="evidence" value="ECO:0007669"/>
    <property type="project" value="UniProtKB-KW"/>
</dbReference>
<dbReference type="GO" id="GO:0042802">
    <property type="term" value="F:identical protein binding"/>
    <property type="evidence" value="ECO:0000353"/>
    <property type="project" value="IntAct"/>
</dbReference>
<dbReference type="GO" id="GO:0016301">
    <property type="term" value="F:kinase activity"/>
    <property type="evidence" value="ECO:0007669"/>
    <property type="project" value="UniProtKB-KW"/>
</dbReference>
<dbReference type="GO" id="GO:0030975">
    <property type="term" value="F:thiamine binding"/>
    <property type="evidence" value="ECO:0007669"/>
    <property type="project" value="InterPro"/>
</dbReference>
<dbReference type="GO" id="GO:0004788">
    <property type="term" value="F:thiamine diphosphokinase activity"/>
    <property type="evidence" value="ECO:0000314"/>
    <property type="project" value="UniProtKB"/>
</dbReference>
<dbReference type="GO" id="GO:0141200">
    <property type="term" value="F:UTP thiamine diphosphokinase activity"/>
    <property type="evidence" value="ECO:0000314"/>
    <property type="project" value="UniProtKB"/>
</dbReference>
<dbReference type="GO" id="GO:0010510">
    <property type="term" value="P:regulation of acetyl-CoA biosynthetic process from pyruvate"/>
    <property type="evidence" value="ECO:0000315"/>
    <property type="project" value="UniProt"/>
</dbReference>
<dbReference type="GO" id="GO:0009229">
    <property type="term" value="P:thiamine diphosphate biosynthetic process"/>
    <property type="evidence" value="ECO:0000314"/>
    <property type="project" value="UniProtKB"/>
</dbReference>
<dbReference type="GO" id="GO:0006772">
    <property type="term" value="P:thiamine metabolic process"/>
    <property type="evidence" value="ECO:0007669"/>
    <property type="project" value="Ensembl"/>
</dbReference>
<dbReference type="CDD" id="cd07995">
    <property type="entry name" value="TPK"/>
    <property type="match status" value="1"/>
</dbReference>
<dbReference type="FunFam" id="3.40.50.10240:FF:000006">
    <property type="entry name" value="Thiamin pyrophosphokinase 1"/>
    <property type="match status" value="1"/>
</dbReference>
<dbReference type="FunFam" id="2.60.120.320:FF:000002">
    <property type="entry name" value="Thiamine pyrophosphokinase"/>
    <property type="match status" value="1"/>
</dbReference>
<dbReference type="Gene3D" id="3.40.50.10240">
    <property type="entry name" value="Thiamin pyrophosphokinase, catalytic domain"/>
    <property type="match status" value="1"/>
</dbReference>
<dbReference type="Gene3D" id="2.60.120.320">
    <property type="entry name" value="Thiamin pyrophosphokinase, thiamin-binding domain"/>
    <property type="match status" value="1"/>
</dbReference>
<dbReference type="InterPro" id="IPR006282">
    <property type="entry name" value="Thi_PPkinase"/>
</dbReference>
<dbReference type="InterPro" id="IPR016966">
    <property type="entry name" value="Thiamin_pyrophosphokinase_euk"/>
</dbReference>
<dbReference type="InterPro" id="IPR007373">
    <property type="entry name" value="Thiamin_PyroPKinase_B1-bd"/>
</dbReference>
<dbReference type="InterPro" id="IPR036371">
    <property type="entry name" value="TPK_B1-bd_sf"/>
</dbReference>
<dbReference type="InterPro" id="IPR007371">
    <property type="entry name" value="TPK_catalytic"/>
</dbReference>
<dbReference type="InterPro" id="IPR036759">
    <property type="entry name" value="TPK_catalytic_sf"/>
</dbReference>
<dbReference type="NCBIfam" id="TIGR01378">
    <property type="entry name" value="thi_PPkinase"/>
    <property type="match status" value="1"/>
</dbReference>
<dbReference type="PANTHER" id="PTHR13622">
    <property type="entry name" value="THIAMIN PYROPHOSPHOKINASE"/>
    <property type="match status" value="1"/>
</dbReference>
<dbReference type="PANTHER" id="PTHR13622:SF8">
    <property type="entry name" value="THIAMIN PYROPHOSPHOKINASE 1"/>
    <property type="match status" value="1"/>
</dbReference>
<dbReference type="Pfam" id="PF04265">
    <property type="entry name" value="TPK_B1_binding"/>
    <property type="match status" value="1"/>
</dbReference>
<dbReference type="Pfam" id="PF04263">
    <property type="entry name" value="TPK_catalytic"/>
    <property type="match status" value="1"/>
</dbReference>
<dbReference type="PIRSF" id="PIRSF031057">
    <property type="entry name" value="Thiamin_pyrophosphokinase"/>
    <property type="match status" value="1"/>
</dbReference>
<dbReference type="SMART" id="SM00983">
    <property type="entry name" value="TPK_B1_binding"/>
    <property type="match status" value="1"/>
</dbReference>
<dbReference type="SUPFAM" id="SSF63999">
    <property type="entry name" value="Thiamin pyrophosphokinase, catalytic domain"/>
    <property type="match status" value="1"/>
</dbReference>
<dbReference type="SUPFAM" id="SSF63862">
    <property type="entry name" value="Thiamin pyrophosphokinase, substrate-binding domain"/>
    <property type="match status" value="1"/>
</dbReference>
<accession>Q9H3S4</accession>
<accession>A8K0T7</accession>
<accession>D3DWG0</accession>
<accession>I6L9B8</accession>
<accession>Q6NUR5</accession>
<accession>Q9H602</accession>
<name>TPK1_HUMAN</name>
<organism>
    <name type="scientific">Homo sapiens</name>
    <name type="common">Human</name>
    <dbReference type="NCBI Taxonomy" id="9606"/>
    <lineage>
        <taxon>Eukaryota</taxon>
        <taxon>Metazoa</taxon>
        <taxon>Chordata</taxon>
        <taxon>Craniata</taxon>
        <taxon>Vertebrata</taxon>
        <taxon>Euteleostomi</taxon>
        <taxon>Mammalia</taxon>
        <taxon>Eutheria</taxon>
        <taxon>Euarchontoglires</taxon>
        <taxon>Primates</taxon>
        <taxon>Haplorrhini</taxon>
        <taxon>Catarrhini</taxon>
        <taxon>Hominidae</taxon>
        <taxon>Homo</taxon>
    </lineage>
</organism>
<protein>
    <recommendedName>
        <fullName evidence="10">Thiamine pyrophosphokinase 1</fullName>
        <shortName evidence="5">hTPK1</shortName>
        <ecNumber evidence="4">2.7.6.-</ecNumber>
    </recommendedName>
    <alternativeName>
        <fullName evidence="7">Placental protein 20</fullName>
        <shortName evidence="7">PP20</shortName>
    </alternativeName>
    <alternativeName>
        <fullName evidence="5">Thiamin pyrophosphokinase 1</fullName>
    </alternativeName>
</protein>
<reference key="1">
    <citation type="journal article" date="2001" name="Biochim. Biophys. Acta">
        <title>Isolation and characterization of a human thiamine pyrophosphokinase cDNA.</title>
        <authorList>
            <person name="Nosaka K."/>
            <person name="Onozuka M."/>
            <person name="Kakazu N."/>
            <person name="Hibi S."/>
            <person name="Nishimura H."/>
            <person name="Nishino H."/>
            <person name="Abe T."/>
        </authorList>
    </citation>
    <scope>NUCLEOTIDE SEQUENCE [MRNA] (ISOFORM 1)</scope>
    <scope>FUNCTION</scope>
    <scope>SUBUNIT</scope>
    <scope>TISSUE SPECIFICITY</scope>
    <source>
        <tissue>Liver</tissue>
    </source>
</reference>
<reference key="2">
    <citation type="journal article" date="2001" name="Biochim. Biophys. Acta">
        <title>Molecular cloning of human thiamin pyrophosphokinase.</title>
        <authorList>
            <person name="Zhao R."/>
            <person name="Gao F."/>
            <person name="Goldman I.D."/>
        </authorList>
    </citation>
    <scope>NUCLEOTIDE SEQUENCE [MRNA] (ISOFORM 1)</scope>
    <scope>TISSUE SPECIFICITY</scope>
    <source>
        <tissue>Liver</tissue>
    </source>
</reference>
<reference key="3">
    <citation type="journal article" date="2005" name="Placenta">
        <title>Cloning, sequencing, structural and molecular biological characterization of placental protein 20 (PP20)/human thiamin pyrophosphokinase (hTPK).</title>
        <authorList>
            <person name="Bellyei S."/>
            <person name="Szigeti A."/>
            <person name="Boronkai A."/>
            <person name="Szabo Z."/>
            <person name="Bene J."/>
            <person name="Janaky T."/>
            <person name="Barna L."/>
            <person name="Sipos K."/>
            <person name="Minik O."/>
            <person name="Kravjak A."/>
            <person name="Ohmacht R."/>
            <person name="Melegh B."/>
            <person name="Zavodszky P."/>
            <person name="Than G.N."/>
            <person name="Sumegi B."/>
            <person name="Bohn H."/>
            <person name="Than N.G."/>
        </authorList>
    </citation>
    <scope>NUCLEOTIDE SEQUENCE [MRNA] (ISOFORM 1)</scope>
</reference>
<reference key="4">
    <citation type="journal article" date="2004" name="Nat. Genet.">
        <title>Complete sequencing and characterization of 21,243 full-length human cDNAs.</title>
        <authorList>
            <person name="Ota T."/>
            <person name="Suzuki Y."/>
            <person name="Nishikawa T."/>
            <person name="Otsuki T."/>
            <person name="Sugiyama T."/>
            <person name="Irie R."/>
            <person name="Wakamatsu A."/>
            <person name="Hayashi K."/>
            <person name="Sato H."/>
            <person name="Nagai K."/>
            <person name="Kimura K."/>
            <person name="Makita H."/>
            <person name="Sekine M."/>
            <person name="Obayashi M."/>
            <person name="Nishi T."/>
            <person name="Shibahara T."/>
            <person name="Tanaka T."/>
            <person name="Ishii S."/>
            <person name="Yamamoto J."/>
            <person name="Saito K."/>
            <person name="Kawai Y."/>
            <person name="Isono Y."/>
            <person name="Nakamura Y."/>
            <person name="Nagahari K."/>
            <person name="Murakami K."/>
            <person name="Yasuda T."/>
            <person name="Iwayanagi T."/>
            <person name="Wagatsuma M."/>
            <person name="Shiratori A."/>
            <person name="Sudo H."/>
            <person name="Hosoiri T."/>
            <person name="Kaku Y."/>
            <person name="Kodaira H."/>
            <person name="Kondo H."/>
            <person name="Sugawara M."/>
            <person name="Takahashi M."/>
            <person name="Kanda K."/>
            <person name="Yokoi T."/>
            <person name="Furuya T."/>
            <person name="Kikkawa E."/>
            <person name="Omura Y."/>
            <person name="Abe K."/>
            <person name="Kamihara K."/>
            <person name="Katsuta N."/>
            <person name="Sato K."/>
            <person name="Tanikawa M."/>
            <person name="Yamazaki M."/>
            <person name="Ninomiya K."/>
            <person name="Ishibashi T."/>
            <person name="Yamashita H."/>
            <person name="Murakawa K."/>
            <person name="Fujimori K."/>
            <person name="Tanai H."/>
            <person name="Kimata M."/>
            <person name="Watanabe M."/>
            <person name="Hiraoka S."/>
            <person name="Chiba Y."/>
            <person name="Ishida S."/>
            <person name="Ono Y."/>
            <person name="Takiguchi S."/>
            <person name="Watanabe S."/>
            <person name="Yosida M."/>
            <person name="Hotuta T."/>
            <person name="Kusano J."/>
            <person name="Kanehori K."/>
            <person name="Takahashi-Fujii A."/>
            <person name="Hara H."/>
            <person name="Tanase T.-O."/>
            <person name="Nomura Y."/>
            <person name="Togiya S."/>
            <person name="Komai F."/>
            <person name="Hara R."/>
            <person name="Takeuchi K."/>
            <person name="Arita M."/>
            <person name="Imose N."/>
            <person name="Musashino K."/>
            <person name="Yuuki H."/>
            <person name="Oshima A."/>
            <person name="Sasaki N."/>
            <person name="Aotsuka S."/>
            <person name="Yoshikawa Y."/>
            <person name="Matsunawa H."/>
            <person name="Ichihara T."/>
            <person name="Shiohata N."/>
            <person name="Sano S."/>
            <person name="Moriya S."/>
            <person name="Momiyama H."/>
            <person name="Satoh N."/>
            <person name="Takami S."/>
            <person name="Terashima Y."/>
            <person name="Suzuki O."/>
            <person name="Nakagawa S."/>
            <person name="Senoh A."/>
            <person name="Mizoguchi H."/>
            <person name="Goto Y."/>
            <person name="Shimizu F."/>
            <person name="Wakebe H."/>
            <person name="Hishigaki H."/>
            <person name="Watanabe T."/>
            <person name="Sugiyama A."/>
            <person name="Takemoto M."/>
            <person name="Kawakami B."/>
            <person name="Yamazaki M."/>
            <person name="Watanabe K."/>
            <person name="Kumagai A."/>
            <person name="Itakura S."/>
            <person name="Fukuzumi Y."/>
            <person name="Fujimori Y."/>
            <person name="Komiyama M."/>
            <person name="Tashiro H."/>
            <person name="Tanigami A."/>
            <person name="Fujiwara T."/>
            <person name="Ono T."/>
            <person name="Yamada K."/>
            <person name="Fujii Y."/>
            <person name="Ozaki K."/>
            <person name="Hirao M."/>
            <person name="Ohmori Y."/>
            <person name="Kawabata A."/>
            <person name="Hikiji T."/>
            <person name="Kobatake N."/>
            <person name="Inagaki H."/>
            <person name="Ikema Y."/>
            <person name="Okamoto S."/>
            <person name="Okitani R."/>
            <person name="Kawakami T."/>
            <person name="Noguchi S."/>
            <person name="Itoh T."/>
            <person name="Shigeta K."/>
            <person name="Senba T."/>
            <person name="Matsumura K."/>
            <person name="Nakajima Y."/>
            <person name="Mizuno T."/>
            <person name="Morinaga M."/>
            <person name="Sasaki M."/>
            <person name="Togashi T."/>
            <person name="Oyama M."/>
            <person name="Hata H."/>
            <person name="Watanabe M."/>
            <person name="Komatsu T."/>
            <person name="Mizushima-Sugano J."/>
            <person name="Satoh T."/>
            <person name="Shirai Y."/>
            <person name="Takahashi Y."/>
            <person name="Nakagawa K."/>
            <person name="Okumura K."/>
            <person name="Nagase T."/>
            <person name="Nomura N."/>
            <person name="Kikuchi H."/>
            <person name="Masuho Y."/>
            <person name="Yamashita R."/>
            <person name="Nakai K."/>
            <person name="Yada T."/>
            <person name="Nakamura Y."/>
            <person name="Ohara O."/>
            <person name="Isogai T."/>
            <person name="Sugano S."/>
        </authorList>
    </citation>
    <scope>NUCLEOTIDE SEQUENCE [LARGE SCALE MRNA] (ISOFORM 1)</scope>
    <source>
        <tissue>Amygdala</tissue>
        <tissue>Small intestine</tissue>
    </source>
</reference>
<reference key="5">
    <citation type="journal article" date="2003" name="Nature">
        <title>The DNA sequence of human chromosome 7.</title>
        <authorList>
            <person name="Hillier L.W."/>
            <person name="Fulton R.S."/>
            <person name="Fulton L.A."/>
            <person name="Graves T.A."/>
            <person name="Pepin K.H."/>
            <person name="Wagner-McPherson C."/>
            <person name="Layman D."/>
            <person name="Maas J."/>
            <person name="Jaeger S."/>
            <person name="Walker R."/>
            <person name="Wylie K."/>
            <person name="Sekhon M."/>
            <person name="Becker M.C."/>
            <person name="O'Laughlin M.D."/>
            <person name="Schaller M.E."/>
            <person name="Fewell G.A."/>
            <person name="Delehaunty K.D."/>
            <person name="Miner T.L."/>
            <person name="Nash W.E."/>
            <person name="Cordes M."/>
            <person name="Du H."/>
            <person name="Sun H."/>
            <person name="Edwards J."/>
            <person name="Bradshaw-Cordum H."/>
            <person name="Ali J."/>
            <person name="Andrews S."/>
            <person name="Isak A."/>
            <person name="Vanbrunt A."/>
            <person name="Nguyen C."/>
            <person name="Du F."/>
            <person name="Lamar B."/>
            <person name="Courtney L."/>
            <person name="Kalicki J."/>
            <person name="Ozersky P."/>
            <person name="Bielicki L."/>
            <person name="Scott K."/>
            <person name="Holmes A."/>
            <person name="Harkins R."/>
            <person name="Harris A."/>
            <person name="Strong C.M."/>
            <person name="Hou S."/>
            <person name="Tomlinson C."/>
            <person name="Dauphin-Kohlberg S."/>
            <person name="Kozlowicz-Reilly A."/>
            <person name="Leonard S."/>
            <person name="Rohlfing T."/>
            <person name="Rock S.M."/>
            <person name="Tin-Wollam A.-M."/>
            <person name="Abbott A."/>
            <person name="Minx P."/>
            <person name="Maupin R."/>
            <person name="Strowmatt C."/>
            <person name="Latreille P."/>
            <person name="Miller N."/>
            <person name="Johnson D."/>
            <person name="Murray J."/>
            <person name="Woessner J.P."/>
            <person name="Wendl M.C."/>
            <person name="Yang S.-P."/>
            <person name="Schultz B.R."/>
            <person name="Wallis J.W."/>
            <person name="Spieth J."/>
            <person name="Bieri T.A."/>
            <person name="Nelson J.O."/>
            <person name="Berkowicz N."/>
            <person name="Wohldmann P.E."/>
            <person name="Cook L.L."/>
            <person name="Hickenbotham M.T."/>
            <person name="Eldred J."/>
            <person name="Williams D."/>
            <person name="Bedell J.A."/>
            <person name="Mardis E.R."/>
            <person name="Clifton S.W."/>
            <person name="Chissoe S.L."/>
            <person name="Marra M.A."/>
            <person name="Raymond C."/>
            <person name="Haugen E."/>
            <person name="Gillett W."/>
            <person name="Zhou Y."/>
            <person name="James R."/>
            <person name="Phelps K."/>
            <person name="Iadanoto S."/>
            <person name="Bubb K."/>
            <person name="Simms E."/>
            <person name="Levy R."/>
            <person name="Clendenning J."/>
            <person name="Kaul R."/>
            <person name="Kent W.J."/>
            <person name="Furey T.S."/>
            <person name="Baertsch R.A."/>
            <person name="Brent M.R."/>
            <person name="Keibler E."/>
            <person name="Flicek P."/>
            <person name="Bork P."/>
            <person name="Suyama M."/>
            <person name="Bailey J.A."/>
            <person name="Portnoy M.E."/>
            <person name="Torrents D."/>
            <person name="Chinwalla A.T."/>
            <person name="Gish W.R."/>
            <person name="Eddy S.R."/>
            <person name="McPherson J.D."/>
            <person name="Olson M.V."/>
            <person name="Eichler E.E."/>
            <person name="Green E.D."/>
            <person name="Waterston R.H."/>
            <person name="Wilson R.K."/>
        </authorList>
    </citation>
    <scope>NUCLEOTIDE SEQUENCE [LARGE SCALE GENOMIC DNA]</scope>
</reference>
<reference key="6">
    <citation type="submission" date="2005-09" db="EMBL/GenBank/DDBJ databases">
        <authorList>
            <person name="Mural R.J."/>
            <person name="Istrail S."/>
            <person name="Sutton G.G."/>
            <person name="Florea L."/>
            <person name="Halpern A.L."/>
            <person name="Mobarry C.M."/>
            <person name="Lippert R."/>
            <person name="Walenz B."/>
            <person name="Shatkay H."/>
            <person name="Dew I."/>
            <person name="Miller J.R."/>
            <person name="Flanigan M.J."/>
            <person name="Edwards N.J."/>
            <person name="Bolanos R."/>
            <person name="Fasulo D."/>
            <person name="Halldorsson B.V."/>
            <person name="Hannenhalli S."/>
            <person name="Turner R."/>
            <person name="Yooseph S."/>
            <person name="Lu F."/>
            <person name="Nusskern D.R."/>
            <person name="Shue B.C."/>
            <person name="Zheng X.H."/>
            <person name="Zhong F."/>
            <person name="Delcher A.L."/>
            <person name="Huson D.H."/>
            <person name="Kravitz S.A."/>
            <person name="Mouchard L."/>
            <person name="Reinert K."/>
            <person name="Remington K.A."/>
            <person name="Clark A.G."/>
            <person name="Waterman M.S."/>
            <person name="Eichler E.E."/>
            <person name="Adams M.D."/>
            <person name="Hunkapiller M.W."/>
            <person name="Myers E.W."/>
            <person name="Venter J.C."/>
        </authorList>
    </citation>
    <scope>NUCLEOTIDE SEQUENCE [LARGE SCALE GENOMIC DNA]</scope>
</reference>
<reference key="7">
    <citation type="journal article" date="2004" name="Genome Res.">
        <title>The status, quality, and expansion of the NIH full-length cDNA project: the Mammalian Gene Collection (MGC).</title>
        <authorList>
            <consortium name="The MGC Project Team"/>
        </authorList>
    </citation>
    <scope>NUCLEOTIDE SEQUENCE [LARGE SCALE MRNA] (ISOFORMS 1 AND 2)</scope>
    <source>
        <tissue>Hypothalamus</tissue>
        <tissue>Testis</tissue>
    </source>
</reference>
<reference key="8">
    <citation type="journal article" date="2024" name="Science">
        <title>Pyrimidines maintain mitochondrial pyruvate oxidation to support de novo lipogenesis.</title>
        <authorList>
            <person name="Sahu U."/>
            <person name="Villa E."/>
            <person name="Reczek C.R."/>
            <person name="Zhao Z."/>
            <person name="O'Hara B.P."/>
            <person name="Torno M.D."/>
            <person name="Mishra R."/>
            <person name="Shannon W.D."/>
            <person name="Asara J.M."/>
            <person name="Gao P."/>
            <person name="Shilatifard A."/>
            <person name="Chandel N.S."/>
            <person name="Ben-Sahra I."/>
        </authorList>
    </citation>
    <scope>FUNCTION</scope>
    <scope>CATALYTIC ACTIVITY</scope>
    <scope>SUBSTRATE SPECIFICITY</scope>
    <scope>BIOPHYSICOCHEMICAL PROPERTIES</scope>
    <scope>PATHWAY</scope>
    <scope>MUTAGENESIS OF ASP-100 AND PHE-101</scope>
</reference>
<reference key="9">
    <citation type="journal article" date="2011" name="Am. J. Hum. Genet.">
        <title>Thiamine pyrophosphokinase deficiency in encephalopathic children with defects in the pyruvate oxidation pathway.</title>
        <authorList>
            <person name="Mayr J.A."/>
            <person name="Freisinger P."/>
            <person name="Schlachter K."/>
            <person name="Rolinski B."/>
            <person name="Zimmermann F.A."/>
            <person name="Scheffner T."/>
            <person name="Haack T.B."/>
            <person name="Koch J."/>
            <person name="Ahting U."/>
            <person name="Prokisch H."/>
            <person name="Sperl W."/>
        </authorList>
    </citation>
    <scope>VARIANTS THMD5 PRO-40; HIS-50 AND SER-219</scope>
</reference>
<feature type="chain" id="PRO_0000072647" description="Thiamine pyrophosphokinase 1">
    <location>
        <begin position="1"/>
        <end position="243"/>
    </location>
</feature>
<feature type="splice variant" id="VSP_056302" description="In isoform 2." evidence="6">
    <original>MEHAFTPLEPLLSTGNLKYCLVILNQPLDNYFRHLWNKALLRACADGGANRLYDITEGERESFLPEFINGDFDSIRPEVREYYATKGCELISTPDQDHTDFTKCLKMLQKKIEEKDLK</original>
    <variation>M</variation>
    <location>
        <begin position="1"/>
        <end position="118"/>
    </location>
</feature>
<feature type="splice variant" id="VSP_056303" description="In isoform 2." evidence="6">
    <original>TNDVLAFGTLVSTSNTYDGSGVVTVETDHPLLWTMAIKS</original>
    <variation>RTCDYTRTTWIAKDNPVPRLIRLIRLNHICKVPLAIK</variation>
    <location>
        <begin position="205"/>
        <end position="243"/>
    </location>
</feature>
<feature type="sequence variant" id="VAR_067391" description="In THMD5; dbSNP:rs387906936." evidence="3">
    <original>L</original>
    <variation>P</variation>
    <location>
        <position position="40"/>
    </location>
</feature>
<feature type="sequence variant" id="VAR_067392" description="In THMD5; dbSNP:rs387906935." evidence="3">
    <original>N</original>
    <variation>H</variation>
    <location>
        <position position="50"/>
    </location>
</feature>
<feature type="sequence variant" id="VAR_067393" description="In THMD5; dbSNP:rs371271054." evidence="3">
    <original>N</original>
    <variation>S</variation>
    <location>
        <position position="219"/>
    </location>
</feature>
<feature type="mutagenesis site" description="Loss of thiamine diphosphokinase activity." evidence="4">
    <original>D</original>
    <variation>A</variation>
    <location>
        <position position="100"/>
    </location>
</feature>
<feature type="mutagenesis site" description="Loss of UTP-specific thiamine diphosphokinase activity." evidence="4">
    <original>F</original>
    <variation>A</variation>
    <location>
        <position position="101"/>
    </location>
</feature>
<feature type="sequence conflict" description="In Ref. 7." evidence="8" ref="7">
    <original>M</original>
    <variation>S</variation>
    <location>
        <position position="193"/>
    </location>
</feature>
<feature type="sequence conflict" description="In Ref. 4." evidence="8" ref="4">
    <original>S</original>
    <variation>P</variation>
    <location>
        <position position="218"/>
    </location>
</feature>
<feature type="strand" evidence="12">
    <location>
        <begin position="19"/>
        <end position="23"/>
    </location>
</feature>
<feature type="helix" evidence="12">
    <location>
        <begin position="32"/>
        <end position="38"/>
    </location>
</feature>
<feature type="strand" evidence="12">
    <location>
        <begin position="42"/>
        <end position="45"/>
    </location>
</feature>
<feature type="helix" evidence="12">
    <location>
        <begin position="48"/>
        <end position="55"/>
    </location>
</feature>
<feature type="turn" evidence="12">
    <location>
        <begin position="56"/>
        <end position="58"/>
    </location>
</feature>
<feature type="helix" evidence="12">
    <location>
        <begin position="60"/>
        <end position="62"/>
    </location>
</feature>
<feature type="strand" evidence="12">
    <location>
        <begin position="66"/>
        <end position="70"/>
    </location>
</feature>
<feature type="strand" evidence="12">
    <location>
        <begin position="73"/>
        <end position="75"/>
    </location>
</feature>
<feature type="helix" evidence="12">
    <location>
        <begin position="77"/>
        <end position="85"/>
    </location>
</feature>
<feature type="strand" evidence="12">
    <location>
        <begin position="89"/>
        <end position="92"/>
    </location>
</feature>
<feature type="helix" evidence="12">
    <location>
        <begin position="100"/>
        <end position="114"/>
    </location>
</feature>
<feature type="strand" evidence="12">
    <location>
        <begin position="120"/>
        <end position="125"/>
    </location>
</feature>
<feature type="strand" evidence="12">
    <location>
        <begin position="128"/>
        <end position="131"/>
    </location>
</feature>
<feature type="helix" evidence="12">
    <location>
        <begin position="132"/>
        <end position="144"/>
    </location>
</feature>
<feature type="helix" evidence="12">
    <location>
        <begin position="145"/>
        <end position="147"/>
    </location>
</feature>
<feature type="strand" evidence="12">
    <location>
        <begin position="153"/>
        <end position="157"/>
    </location>
</feature>
<feature type="strand" evidence="12">
    <location>
        <begin position="160"/>
        <end position="165"/>
    </location>
</feature>
<feature type="strand" evidence="12">
    <location>
        <begin position="167"/>
        <end position="173"/>
    </location>
</feature>
<feature type="strand" evidence="12">
    <location>
        <begin position="179"/>
        <end position="186"/>
    </location>
</feature>
<feature type="strand" evidence="12">
    <location>
        <begin position="192"/>
        <end position="202"/>
    </location>
</feature>
<feature type="strand" evidence="12">
    <location>
        <begin position="205"/>
        <end position="210"/>
    </location>
</feature>
<feature type="turn" evidence="12">
    <location>
        <begin position="211"/>
        <end position="213"/>
    </location>
</feature>
<feature type="strand" evidence="12">
    <location>
        <begin position="216"/>
        <end position="219"/>
    </location>
</feature>
<feature type="strand" evidence="12">
    <location>
        <begin position="225"/>
        <end position="233"/>
    </location>
</feature>
<feature type="strand" evidence="12">
    <location>
        <begin position="235"/>
        <end position="241"/>
    </location>
</feature>
<proteinExistence type="evidence at protein level"/>
<gene>
    <name evidence="5 11" type="primary">TPK1</name>
</gene>
<sequence length="243" mass="27265">MEHAFTPLEPLLSTGNLKYCLVILNQPLDNYFRHLWNKALLRACADGGANRLYDITEGERESFLPEFINGDFDSIRPEVREYYATKGCELISTPDQDHTDFTKCLKMLQKKIEEKDLKVDVIVTLGGLAGRFDQIMASVNTLFQATHITPFPIIIIQEESLIYLLQPGKHRLHVDTGMEGDWCGLIPVGQPCMQVTTTGLKWNLTNDVLAFGTLVSTSNTYDGSGVVTVETDHPLLWTMAIKS</sequence>
<comment type="function">
    <text evidence="1 4">Catalyzes the phosphorylation of thiamine to thiamine pyrophosphate (TPP) utilizing UTP and therefore links the biosynthesis of TPP to pyrimidines metabolism (PubMed:38547260). By producing thiamine pyrophosphate, a cofactor of the mitochondrial pyruvate dehydrogenase indirectly regulates pyruvate oxidation and lipogenesis (PubMed:38547260). Although it can also catalyze thiamine phosphorylation using ATP and CTP in vitro, it does so with significantly lower efficiency and without physiological relevance evidence (PubMed:11342111, PubMed:38547260).</text>
</comment>
<comment type="catalytic activity">
    <reaction evidence="4">
        <text>thiamine + UTP = thiamine diphosphate + UMP + H(+)</text>
        <dbReference type="Rhea" id="RHEA:79423"/>
        <dbReference type="ChEBI" id="CHEBI:15378"/>
        <dbReference type="ChEBI" id="CHEBI:18385"/>
        <dbReference type="ChEBI" id="CHEBI:46398"/>
        <dbReference type="ChEBI" id="CHEBI:57865"/>
        <dbReference type="ChEBI" id="CHEBI:58937"/>
    </reaction>
    <physiologicalReaction direction="left-to-right" evidence="10">
        <dbReference type="Rhea" id="RHEA:79424"/>
    </physiologicalReaction>
</comment>
<comment type="biophysicochemical properties">
    <kinetics>
        <KM evidence="4">0.33 mM for UTP</KM>
        <KM evidence="4">5 mM for ATP</KM>
    </kinetics>
</comment>
<comment type="pathway">
    <text evidence="4">Cofactor biosynthesis; thiamine diphosphate biosynthesis; thiamine diphosphate from thiamine: step 1/1.</text>
</comment>
<comment type="subunit">
    <text evidence="9">Homodimer.</text>
</comment>
<comment type="interaction">
    <interactant intactId="EBI-7054500">
        <id>Q9H3S4</id>
    </interactant>
    <interactant intactId="EBI-3938544">
        <id>O14841</id>
        <label>OPLAH</label>
    </interactant>
    <organismsDiffer>false</organismsDiffer>
    <experiments>3</experiments>
</comment>
<comment type="interaction">
    <interactant intactId="EBI-7054500">
        <id>Q9H3S4</id>
    </interactant>
    <interactant intactId="EBI-7054500">
        <id>Q9H3S4</id>
        <label>TPK1</label>
    </interactant>
    <organismsDiffer>false</organismsDiffer>
    <experiments>8</experiments>
</comment>
<comment type="alternative products">
    <event type="alternative splicing"/>
    <isoform>
        <id>Q9H3S4-1</id>
        <name>1</name>
        <sequence type="displayed"/>
    </isoform>
    <isoform>
        <id>Q9H3S4-2</id>
        <name>2</name>
        <sequence type="described" ref="VSP_056302 VSP_056303"/>
    </isoform>
</comment>
<comment type="tissue specificity">
    <text evidence="1 2">Detected in heart, kidney, testis, small intestine and peripheral blood leukocytes, and at very low levels in a variety of tissues.</text>
</comment>
<comment type="disease" evidence="3">
    <disease id="DI-03377">
        <name>Thiamine metabolism dysfunction syndrome 5, episodic encephalopathy type</name>
        <acronym>THMD5</acronym>
        <description>An autosomal recessive metabolic disorder due to an inborn error of thiamine metabolism. The phenotype is highly variable, but in general, affected individuals have onset in early childhood of acute encephalopathic episodes associated with increased serum and CSF lactate. These episodes result in progressive neurologic dysfunction manifest as gait disturbances, ataxia, dystonia, and spasticity, which in some cases may result in loss of ability to walk. Cognitive function is usually preserved, although mildly delayed development has been reported. These episodes are usually associated with infection and metabolic decompensation. Some patients may have recovery of some neurologic deficits.</description>
        <dbReference type="MIM" id="614458"/>
    </disease>
    <text>The disease is caused by variants affecting the gene represented in this entry.</text>
</comment>
<comment type="similarity">
    <text evidence="8">Belongs to the thiamine pyrophosphokinase family.</text>
</comment>
<comment type="sequence caution" evidence="8">
    <conflict type="erroneous initiation">
        <sequence resource="EMBL-CDS" id="BAB15465"/>
    </conflict>
</comment>